<accession>Q5K0C4</accession>
<dbReference type="EMBL" id="AJ851184">
    <property type="protein sequence ID" value="CAH64857.1"/>
    <property type="molecule type" value="mRNA"/>
</dbReference>
<dbReference type="SMR" id="Q5K0C4"/>
<dbReference type="ConoServer" id="1073">
    <property type="toxin name" value="Conotoxin-1 precursor"/>
</dbReference>
<dbReference type="GO" id="GO:0005576">
    <property type="term" value="C:extracellular region"/>
    <property type="evidence" value="ECO:0007669"/>
    <property type="project" value="UniProtKB-SubCell"/>
</dbReference>
<dbReference type="GO" id="GO:0044231">
    <property type="term" value="C:host cell presynaptic membrane"/>
    <property type="evidence" value="ECO:0007669"/>
    <property type="project" value="UniProtKB-KW"/>
</dbReference>
<dbReference type="GO" id="GO:0005246">
    <property type="term" value="F:calcium channel regulator activity"/>
    <property type="evidence" value="ECO:0007669"/>
    <property type="project" value="UniProtKB-KW"/>
</dbReference>
<dbReference type="GO" id="GO:0008200">
    <property type="term" value="F:ion channel inhibitor activity"/>
    <property type="evidence" value="ECO:0007669"/>
    <property type="project" value="InterPro"/>
</dbReference>
<dbReference type="GO" id="GO:0090729">
    <property type="term" value="F:toxin activity"/>
    <property type="evidence" value="ECO:0007669"/>
    <property type="project" value="UniProtKB-KW"/>
</dbReference>
<dbReference type="InterPro" id="IPR004214">
    <property type="entry name" value="Conotoxin"/>
</dbReference>
<dbReference type="Pfam" id="PF02950">
    <property type="entry name" value="Conotoxin"/>
    <property type="match status" value="1"/>
</dbReference>
<keyword id="KW-0108">Calcium channel impairing toxin</keyword>
<keyword id="KW-0165">Cleavage on pair of basic residues</keyword>
<keyword id="KW-1015">Disulfide bond</keyword>
<keyword id="KW-0872">Ion channel impairing toxin</keyword>
<keyword id="KW-0960">Knottin</keyword>
<keyword id="KW-0528">Neurotoxin</keyword>
<keyword id="KW-0638">Presynaptic neurotoxin</keyword>
<keyword id="KW-0964">Secreted</keyword>
<keyword id="KW-0732">Signal</keyword>
<keyword id="KW-0800">Toxin</keyword>
<keyword id="KW-1218">Voltage-gated calcium channel impairing toxin</keyword>
<protein>
    <recommendedName>
        <fullName>Omega-conotoxin-like 1</fullName>
    </recommendedName>
</protein>
<reference key="1">
    <citation type="journal article" date="2005" name="Peptides">
        <title>Direct cDNA cloning of novel conopeptide precursors of the O-superfamily.</title>
        <authorList>
            <person name="Kauferstein S."/>
            <person name="Melaun C."/>
            <person name="Mebs D."/>
        </authorList>
    </citation>
    <scope>NUCLEOTIDE SEQUENCE [MRNA]</scope>
    <source>
        <tissue>Venom duct</tissue>
    </source>
</reference>
<feature type="signal peptide" evidence="2">
    <location>
        <begin position="1"/>
        <end position="22"/>
    </location>
</feature>
<feature type="propeptide" id="PRO_0000034904" evidence="1">
    <location>
        <begin position="23"/>
        <end position="49"/>
    </location>
</feature>
<feature type="peptide" id="PRO_0000034905" description="Omega-conotoxin-like 1">
    <location>
        <begin position="52"/>
        <end position="80"/>
    </location>
</feature>
<feature type="disulfide bond" evidence="1">
    <location>
        <begin position="52"/>
        <end position="66"/>
    </location>
</feature>
<feature type="disulfide bond" evidence="1">
    <location>
        <begin position="59"/>
        <end position="70"/>
    </location>
</feature>
<feature type="disulfide bond" evidence="1">
    <location>
        <begin position="65"/>
        <end position="79"/>
    </location>
</feature>
<evidence type="ECO:0000250" key="1"/>
<evidence type="ECO:0000255" key="2"/>
<evidence type="ECO:0000269" key="3">
    <source>
    </source>
</evidence>
<evidence type="ECO:0000305" key="4"/>
<sequence length="80" mass="8936">MKLTCVLIVVVLFLTACQLITTDDSTGKQRYQAWKLRSKMQNSVLSRLSKRCDEEGTGCSSDSECCSGRCTPEGLFEFCE</sequence>
<name>O161_CONCE</name>
<organism>
    <name type="scientific">Conus capitaneus</name>
    <name type="common">Captain cone</name>
    <dbReference type="NCBI Taxonomy" id="89439"/>
    <lineage>
        <taxon>Eukaryota</taxon>
        <taxon>Metazoa</taxon>
        <taxon>Spiralia</taxon>
        <taxon>Lophotrochozoa</taxon>
        <taxon>Mollusca</taxon>
        <taxon>Gastropoda</taxon>
        <taxon>Caenogastropoda</taxon>
        <taxon>Neogastropoda</taxon>
        <taxon>Conoidea</taxon>
        <taxon>Conidae</taxon>
        <taxon>Conus</taxon>
        <taxon>Rhizoconus</taxon>
    </lineage>
</organism>
<comment type="function">
    <text evidence="1">Omega-conotoxins act at presynaptic membranes, they bind and block voltage-gated calcium channels (Cav).</text>
</comment>
<comment type="subcellular location">
    <subcellularLocation>
        <location evidence="1">Secreted</location>
    </subcellularLocation>
</comment>
<comment type="tissue specificity">
    <text>Expressed by the venom duct.</text>
</comment>
<comment type="domain">
    <text evidence="1">The presence of a 'disulfide through disulfide knot' structurally defines this protein as a knottin.</text>
</comment>
<comment type="domain">
    <text>The cysteine framework is VI/VII (C-C-CC-C-C).</text>
</comment>
<comment type="PTM">
    <text evidence="3">Peptide predicted to begin at Arg-51, but it seems more probable that it begins at Cys-52, since this position corresponds to a dibasic residue cleavage.</text>
</comment>
<comment type="similarity">
    <text evidence="4">Belongs to the conotoxin O1 superfamily.</text>
</comment>
<proteinExistence type="evidence at transcript level"/>